<dbReference type="EMBL" id="CM000127">
    <property type="protein sequence ID" value="EAY84611.1"/>
    <property type="molecule type" value="Genomic_DNA"/>
</dbReference>
<dbReference type="SMR" id="A2X1A1"/>
<dbReference type="STRING" id="39946.A2X1A1"/>
<dbReference type="EnsemblPlants" id="BGIOSGA007604-TA">
    <property type="protein sequence ID" value="BGIOSGA007604-PA"/>
    <property type="gene ID" value="BGIOSGA007604"/>
</dbReference>
<dbReference type="EnsemblPlants" id="OsGoSa_02g0005150.01">
    <property type="protein sequence ID" value="OsGoSa_02g0005150.01"/>
    <property type="gene ID" value="OsGoSa_02g0005150"/>
</dbReference>
<dbReference type="EnsemblPlants" id="OsLaMu_02g0004860.01">
    <property type="protein sequence ID" value="OsLaMu_02g0004860.01"/>
    <property type="gene ID" value="OsLaMu_02g0004860"/>
</dbReference>
<dbReference type="EnsemblPlants" id="OsPr106_02g0004890.01">
    <property type="protein sequence ID" value="OsPr106_02g0004890.01"/>
    <property type="gene ID" value="OsPr106_02g0004890"/>
</dbReference>
<dbReference type="Gramene" id="BGIOSGA007604-TA">
    <property type="protein sequence ID" value="BGIOSGA007604-PA"/>
    <property type="gene ID" value="BGIOSGA007604"/>
</dbReference>
<dbReference type="Gramene" id="OsGoSa_02g0005150.01">
    <property type="protein sequence ID" value="OsGoSa_02g0005150.01"/>
    <property type="gene ID" value="OsGoSa_02g0005150"/>
</dbReference>
<dbReference type="Gramene" id="OsLaMu_02g0004860.01">
    <property type="protein sequence ID" value="OsLaMu_02g0004860.01"/>
    <property type="gene ID" value="OsLaMu_02g0004860"/>
</dbReference>
<dbReference type="Gramene" id="OsPr106_02g0004890.01">
    <property type="protein sequence ID" value="OsPr106_02g0004890.01"/>
    <property type="gene ID" value="OsPr106_02g0004890"/>
</dbReference>
<dbReference type="HOGENOM" id="CLU_002626_1_0_1"/>
<dbReference type="OMA" id="ESEYVPC"/>
<dbReference type="OrthoDB" id="2016915at2759"/>
<dbReference type="Proteomes" id="UP000007015">
    <property type="component" value="Chromosome 2"/>
</dbReference>
<dbReference type="GO" id="GO:0005634">
    <property type="term" value="C:nucleus"/>
    <property type="evidence" value="ECO:0007669"/>
    <property type="project" value="UniProtKB-SubCell"/>
</dbReference>
<dbReference type="GO" id="GO:0003677">
    <property type="term" value="F:DNA binding"/>
    <property type="evidence" value="ECO:0007669"/>
    <property type="project" value="UniProtKB-KW"/>
</dbReference>
<dbReference type="GO" id="GO:0009734">
    <property type="term" value="P:auxin-activated signaling pathway"/>
    <property type="evidence" value="ECO:0007669"/>
    <property type="project" value="UniProtKB-KW"/>
</dbReference>
<dbReference type="GO" id="GO:0006355">
    <property type="term" value="P:regulation of DNA-templated transcription"/>
    <property type="evidence" value="ECO:0007669"/>
    <property type="project" value="InterPro"/>
</dbReference>
<dbReference type="CDD" id="cd10017">
    <property type="entry name" value="B3_DNA"/>
    <property type="match status" value="1"/>
</dbReference>
<dbReference type="FunFam" id="2.30.30.1040:FF:000001">
    <property type="entry name" value="Auxin response factor"/>
    <property type="match status" value="1"/>
</dbReference>
<dbReference type="FunFam" id="2.40.330.10:FF:000001">
    <property type="entry name" value="Auxin response factor"/>
    <property type="match status" value="1"/>
</dbReference>
<dbReference type="FunFam" id="3.10.20.90:FF:000047">
    <property type="entry name" value="Auxin response factor"/>
    <property type="match status" value="1"/>
</dbReference>
<dbReference type="Gene3D" id="2.30.30.1040">
    <property type="match status" value="1"/>
</dbReference>
<dbReference type="Gene3D" id="2.40.330.10">
    <property type="entry name" value="DNA-binding pseudobarrel domain"/>
    <property type="match status" value="1"/>
</dbReference>
<dbReference type="Gene3D" id="3.10.20.90">
    <property type="entry name" value="Phosphatidylinositol 3-kinase Catalytic Subunit, Chain A, domain 1"/>
    <property type="match status" value="1"/>
</dbReference>
<dbReference type="InterPro" id="IPR010525">
    <property type="entry name" value="ARF_dom"/>
</dbReference>
<dbReference type="InterPro" id="IPR044835">
    <property type="entry name" value="ARF_plant"/>
</dbReference>
<dbReference type="InterPro" id="IPR033389">
    <property type="entry name" value="AUX/IAA_dom"/>
</dbReference>
<dbReference type="InterPro" id="IPR003340">
    <property type="entry name" value="B3_DNA-bd"/>
</dbReference>
<dbReference type="InterPro" id="IPR015300">
    <property type="entry name" value="DNA-bd_pseudobarrel_sf"/>
</dbReference>
<dbReference type="InterPro" id="IPR053793">
    <property type="entry name" value="PB1-like"/>
</dbReference>
<dbReference type="PANTHER" id="PTHR31384">
    <property type="entry name" value="AUXIN RESPONSE FACTOR 4-RELATED"/>
    <property type="match status" value="1"/>
</dbReference>
<dbReference type="PANTHER" id="PTHR31384:SF115">
    <property type="entry name" value="AUXIN RESPONSE FACTOR 6"/>
    <property type="match status" value="1"/>
</dbReference>
<dbReference type="Pfam" id="PF06507">
    <property type="entry name" value="ARF_AD"/>
    <property type="match status" value="1"/>
</dbReference>
<dbReference type="Pfam" id="PF02309">
    <property type="entry name" value="AUX_IAA"/>
    <property type="match status" value="1"/>
</dbReference>
<dbReference type="Pfam" id="PF02362">
    <property type="entry name" value="B3"/>
    <property type="match status" value="1"/>
</dbReference>
<dbReference type="SMART" id="SM01019">
    <property type="entry name" value="B3"/>
    <property type="match status" value="1"/>
</dbReference>
<dbReference type="SUPFAM" id="SSF54277">
    <property type="entry name" value="CAD &amp; PB1 domains"/>
    <property type="match status" value="1"/>
</dbReference>
<dbReference type="SUPFAM" id="SSF101936">
    <property type="entry name" value="DNA-binding pseudobarrel domain"/>
    <property type="match status" value="1"/>
</dbReference>
<dbReference type="PROSITE" id="PS50863">
    <property type="entry name" value="B3"/>
    <property type="match status" value="1"/>
</dbReference>
<dbReference type="PROSITE" id="PS51745">
    <property type="entry name" value="PB1"/>
    <property type="match status" value="1"/>
</dbReference>
<proteinExistence type="inferred from homology"/>
<keyword id="KW-0927">Auxin signaling pathway</keyword>
<keyword id="KW-0238">DNA-binding</keyword>
<keyword id="KW-0539">Nucleus</keyword>
<keyword id="KW-1185">Reference proteome</keyword>
<keyword id="KW-0804">Transcription</keyword>
<keyword id="KW-0805">Transcription regulation</keyword>
<reference key="1">
    <citation type="journal article" date="2005" name="PLoS Biol.">
        <title>The genomes of Oryza sativa: a history of duplications.</title>
        <authorList>
            <person name="Yu J."/>
            <person name="Wang J."/>
            <person name="Lin W."/>
            <person name="Li S."/>
            <person name="Li H."/>
            <person name="Zhou J."/>
            <person name="Ni P."/>
            <person name="Dong W."/>
            <person name="Hu S."/>
            <person name="Zeng C."/>
            <person name="Zhang J."/>
            <person name="Zhang Y."/>
            <person name="Li R."/>
            <person name="Xu Z."/>
            <person name="Li S."/>
            <person name="Li X."/>
            <person name="Zheng H."/>
            <person name="Cong L."/>
            <person name="Lin L."/>
            <person name="Yin J."/>
            <person name="Geng J."/>
            <person name="Li G."/>
            <person name="Shi J."/>
            <person name="Liu J."/>
            <person name="Lv H."/>
            <person name="Li J."/>
            <person name="Wang J."/>
            <person name="Deng Y."/>
            <person name="Ran L."/>
            <person name="Shi X."/>
            <person name="Wang X."/>
            <person name="Wu Q."/>
            <person name="Li C."/>
            <person name="Ren X."/>
            <person name="Wang J."/>
            <person name="Wang X."/>
            <person name="Li D."/>
            <person name="Liu D."/>
            <person name="Zhang X."/>
            <person name="Ji Z."/>
            <person name="Zhao W."/>
            <person name="Sun Y."/>
            <person name="Zhang Z."/>
            <person name="Bao J."/>
            <person name="Han Y."/>
            <person name="Dong L."/>
            <person name="Ji J."/>
            <person name="Chen P."/>
            <person name="Wu S."/>
            <person name="Liu J."/>
            <person name="Xiao Y."/>
            <person name="Bu D."/>
            <person name="Tan J."/>
            <person name="Yang L."/>
            <person name="Ye C."/>
            <person name="Zhang J."/>
            <person name="Xu J."/>
            <person name="Zhou Y."/>
            <person name="Yu Y."/>
            <person name="Zhang B."/>
            <person name="Zhuang S."/>
            <person name="Wei H."/>
            <person name="Liu B."/>
            <person name="Lei M."/>
            <person name="Yu H."/>
            <person name="Li Y."/>
            <person name="Xu H."/>
            <person name="Wei S."/>
            <person name="He X."/>
            <person name="Fang L."/>
            <person name="Zhang Z."/>
            <person name="Zhang Y."/>
            <person name="Huang X."/>
            <person name="Su Z."/>
            <person name="Tong W."/>
            <person name="Li J."/>
            <person name="Tong Z."/>
            <person name="Li S."/>
            <person name="Ye J."/>
            <person name="Wang L."/>
            <person name="Fang L."/>
            <person name="Lei T."/>
            <person name="Chen C.-S."/>
            <person name="Chen H.-C."/>
            <person name="Xu Z."/>
            <person name="Li H."/>
            <person name="Huang H."/>
            <person name="Zhang F."/>
            <person name="Xu H."/>
            <person name="Li N."/>
            <person name="Zhao C."/>
            <person name="Li S."/>
            <person name="Dong L."/>
            <person name="Huang Y."/>
            <person name="Li L."/>
            <person name="Xi Y."/>
            <person name="Qi Q."/>
            <person name="Li W."/>
            <person name="Zhang B."/>
            <person name="Hu W."/>
            <person name="Zhang Y."/>
            <person name="Tian X."/>
            <person name="Jiao Y."/>
            <person name="Liang X."/>
            <person name="Jin J."/>
            <person name="Gao L."/>
            <person name="Zheng W."/>
            <person name="Hao B."/>
            <person name="Liu S.-M."/>
            <person name="Wang W."/>
            <person name="Yuan L."/>
            <person name="Cao M."/>
            <person name="McDermott J."/>
            <person name="Samudrala R."/>
            <person name="Wang J."/>
            <person name="Wong G.K.-S."/>
            <person name="Yang H."/>
        </authorList>
    </citation>
    <scope>NUCLEOTIDE SEQUENCE [LARGE SCALE GENOMIC DNA]</scope>
    <source>
        <strain>cv. 93-11</strain>
    </source>
</reference>
<reference key="2">
    <citation type="journal article" date="2007" name="Gene">
        <title>Genome-wide analysis of the auxin response factors (ARF) gene family in rice (Oryza sativa).</title>
        <authorList>
            <person name="Wang D."/>
            <person name="Pei K."/>
            <person name="Fu Y."/>
            <person name="Sun Z."/>
            <person name="Li S."/>
            <person name="Liu H."/>
            <person name="Tang K."/>
            <person name="Han B."/>
            <person name="Tao Y."/>
        </authorList>
    </citation>
    <scope>GENE FAMILY</scope>
    <scope>NOMENCLATURE</scope>
</reference>
<comment type="function">
    <text>Auxin response factors (ARFs) are transcriptional factors that bind specifically to the DNA sequence 5'-TGTCTC-3' found in the auxin-responsive promoter elements (AuxREs).</text>
</comment>
<comment type="subunit">
    <text evidence="1">Homodimers and heterodimers.</text>
</comment>
<comment type="subcellular location">
    <subcellularLocation>
        <location evidence="2">Nucleus</location>
    </subcellularLocation>
</comment>
<comment type="domain">
    <text>Interactions between auxin response factors (ARFs) and Aux/IAA proteins occur through their C-terminal dimerization domains III and IV.</text>
</comment>
<comment type="similarity">
    <text evidence="5">Belongs to the ARF family.</text>
</comment>
<evidence type="ECO:0000250" key="1"/>
<evidence type="ECO:0000255" key="2">
    <source>
        <dbReference type="PROSITE-ProRule" id="PRU00326"/>
    </source>
</evidence>
<evidence type="ECO:0000255" key="3">
    <source>
        <dbReference type="PROSITE-ProRule" id="PRU01081"/>
    </source>
</evidence>
<evidence type="ECO:0000256" key="4">
    <source>
        <dbReference type="SAM" id="MobiDB-lite"/>
    </source>
</evidence>
<evidence type="ECO:0000305" key="5"/>
<organism>
    <name type="scientific">Oryza sativa subsp. indica</name>
    <name type="common">Rice</name>
    <dbReference type="NCBI Taxonomy" id="39946"/>
    <lineage>
        <taxon>Eukaryota</taxon>
        <taxon>Viridiplantae</taxon>
        <taxon>Streptophyta</taxon>
        <taxon>Embryophyta</taxon>
        <taxon>Tracheophyta</taxon>
        <taxon>Spermatophyta</taxon>
        <taxon>Magnoliopsida</taxon>
        <taxon>Liliopsida</taxon>
        <taxon>Poales</taxon>
        <taxon>Poaceae</taxon>
        <taxon>BOP clade</taxon>
        <taxon>Oryzoideae</taxon>
        <taxon>Oryzeae</taxon>
        <taxon>Oryzinae</taxon>
        <taxon>Oryza</taxon>
        <taxon>Oryza sativa</taxon>
    </lineage>
</organism>
<name>ARFF_ORYSI</name>
<accession>A2X1A1</accession>
<sequence>MKLSPSAGGVSDQPPSPPEVAEEQKCLNSELWHACAGPLVSLPAVGSRVVYFPQGHSEQVAASTNKEMESQIPNYPNLPPQLICQLHNVTMHADAETDEVYAQMTLQPLSPQELKDPFLPAELGTASKQPTNYFCKTLTASDTSTHGGFSVPRRAAEKVFPPLDFTQQPPAQELMAKDLHGNEWKFRHIFRGQPKRHLLTTGWSVFVSAKRLVAGDSVLFIWNDSNQLLLGIRRANRPQTVMPSSVLSSDSMHIGLLAAAAHAASTNSRFTIFYNPRASPSEFVIPLAKYVKAVYHTRISVGMRFRMLFETEESSVRRYMGTITGISDLDPVRWMNSHWRSVKVGWDESTAGERQPRVSLWEIEPLTTFPMYPSPFPLRLKRPWPTGLPSLYGGKEDDLASSLMWLRDSQNTGFQSLNFGGLGMSPWMQPRLDSSLLGLQPDMYQTIAAAAALQNTTKQVSPAMLQFQQPQNIVGRSSLLSSQILQQAQPQFQQMYHQNINGNSIQGHSQPEYLQQPLQHCQSFNEQKPQLQPQQQQQESHQQQPQHQQMQQQKHLSNFQTVPNALSVFSQLSSTPQSTPSTLQTVSPFSQQHNFPDTNISCLSPSNVSSMHDTLRSFPSEAASDLPGVPRITPVPVSDPWSSKRVAVESTITSRPHDISSQIENFDLTPSSIPQNSTLAPLPGRECLVDQDGSSDPQNHFLFGVNIDSQSLLMQDGIPSLHNENSSSTIPYSTSNFLSPSQDDYPLSQTLTTPGCLDESGYVPCSDNADQVKRPHATFVKVYKSGTVGRLLDITRFSSYHELRSEVGRLFGLEGQLEDPLRSGWQLVFVDREDDVLLVGDDPWQEFVNSVSCIKILSPQEVQQMGKPGIELFSTSARRLGNSCDNYMSRQESRSLSTGIASVGSVEF</sequence>
<protein>
    <recommendedName>
        <fullName>Auxin response factor 6</fullName>
    </recommendedName>
    <alternativeName>
        <fullName>OsARF6a</fullName>
    </alternativeName>
</protein>
<gene>
    <name type="primary">ARF6</name>
    <name type="synonym">ARF6A</name>
    <name type="ORF">OsI_005844</name>
</gene>
<feature type="chain" id="PRO_0000299259" description="Auxin response factor 6">
    <location>
        <begin position="1"/>
        <end position="908"/>
    </location>
</feature>
<feature type="domain" description="PB1" evidence="3">
    <location>
        <begin position="777"/>
        <end position="861"/>
    </location>
</feature>
<feature type="DNA-binding region" description="TF-B3" evidence="2">
    <location>
        <begin position="134"/>
        <end position="236"/>
    </location>
</feature>
<feature type="region of interest" description="Disordered" evidence="4">
    <location>
        <begin position="1"/>
        <end position="21"/>
    </location>
</feature>
<feature type="region of interest" description="Disordered" evidence="4">
    <location>
        <begin position="525"/>
        <end position="556"/>
    </location>
</feature>
<feature type="compositionally biased region" description="Low complexity" evidence="4">
    <location>
        <begin position="526"/>
        <end position="556"/>
    </location>
</feature>